<organism>
    <name type="scientific">Mus musculus</name>
    <name type="common">Mouse</name>
    <dbReference type="NCBI Taxonomy" id="10090"/>
    <lineage>
        <taxon>Eukaryota</taxon>
        <taxon>Metazoa</taxon>
        <taxon>Chordata</taxon>
        <taxon>Craniata</taxon>
        <taxon>Vertebrata</taxon>
        <taxon>Euteleostomi</taxon>
        <taxon>Mammalia</taxon>
        <taxon>Eutheria</taxon>
        <taxon>Euarchontoglires</taxon>
        <taxon>Glires</taxon>
        <taxon>Rodentia</taxon>
        <taxon>Myomorpha</taxon>
        <taxon>Muroidea</taxon>
        <taxon>Muridae</taxon>
        <taxon>Murinae</taxon>
        <taxon>Mus</taxon>
        <taxon>Mus</taxon>
    </lineage>
</organism>
<keyword id="KW-0007">Acetylation</keyword>
<keyword id="KW-0025">Alternative splicing</keyword>
<keyword id="KW-0903">Direct protein sequencing</keyword>
<keyword id="KW-1017">Isopeptide bond</keyword>
<keyword id="KW-0488">Methylation</keyword>
<keyword id="KW-0507">mRNA processing</keyword>
<keyword id="KW-0508">mRNA splicing</keyword>
<keyword id="KW-0539">Nucleus</keyword>
<keyword id="KW-0597">Phosphoprotein</keyword>
<keyword id="KW-1185">Reference proteome</keyword>
<keyword id="KW-0677">Repeat</keyword>
<keyword id="KW-0687">Ribonucleoprotein</keyword>
<keyword id="KW-0694">RNA-binding</keyword>
<keyword id="KW-0747">Spliceosome</keyword>
<keyword id="KW-0832">Ubl conjugation</keyword>
<name>ROA3_MOUSE</name>
<gene>
    <name type="primary">Hnrnpa3</name>
    <name type="synonym">Hnrpa3</name>
</gene>
<protein>
    <recommendedName>
        <fullName>Heterogeneous nuclear ribonucleoprotein A3</fullName>
        <shortName>hnRNP A3</shortName>
    </recommendedName>
</protein>
<feature type="chain" id="PRO_0000081839" description="Heterogeneous nuclear ribonucleoprotein A3">
    <location>
        <begin position="1"/>
        <end position="379"/>
    </location>
</feature>
<feature type="domain" description="RRM 1" evidence="4">
    <location>
        <begin position="35"/>
        <end position="118"/>
    </location>
</feature>
<feature type="domain" description="RRM 2" evidence="4">
    <location>
        <begin position="126"/>
        <end position="205"/>
    </location>
</feature>
<feature type="region of interest" description="Disordered" evidence="5">
    <location>
        <begin position="1"/>
        <end position="34"/>
    </location>
</feature>
<feature type="region of interest" description="Disordered" evidence="5">
    <location>
        <begin position="204"/>
        <end position="225"/>
    </location>
</feature>
<feature type="region of interest" description="Disordered" evidence="5">
    <location>
        <begin position="335"/>
        <end position="379"/>
    </location>
</feature>
<feature type="compositionally biased region" description="Pro residues" evidence="5">
    <location>
        <begin position="1"/>
        <end position="10"/>
    </location>
</feature>
<feature type="compositionally biased region" description="Basic and acidic residues" evidence="5">
    <location>
        <begin position="21"/>
        <end position="34"/>
    </location>
</feature>
<feature type="compositionally biased region" description="Gly residues" evidence="5">
    <location>
        <begin position="214"/>
        <end position="225"/>
    </location>
</feature>
<feature type="compositionally biased region" description="Gly residues" evidence="5">
    <location>
        <begin position="347"/>
        <end position="379"/>
    </location>
</feature>
<feature type="modified residue" description="N-acetylmethionine" evidence="2">
    <location>
        <position position="1"/>
    </location>
</feature>
<feature type="modified residue" description="Phosphoserine" evidence="2">
    <location>
        <position position="14"/>
    </location>
</feature>
<feature type="modified residue" description="Phosphoserine" evidence="2">
    <location>
        <position position="43"/>
    </location>
</feature>
<feature type="modified residue" description="Dimethylated arginine; alternate" evidence="2">
    <location>
        <position position="52"/>
    </location>
</feature>
<feature type="modified residue" description="Omega-N-methylarginine; alternate" evidence="2">
    <location>
        <position position="52"/>
    </location>
</feature>
<feature type="modified residue" description="Omega-N-methylarginine" evidence="2">
    <location>
        <position position="76"/>
    </location>
</feature>
<feature type="modified residue" description="Phosphoserine" evidence="2">
    <location>
        <position position="112"/>
    </location>
</feature>
<feature type="modified residue" description="Phosphoserine" evidence="2">
    <location>
        <position position="116"/>
    </location>
</feature>
<feature type="modified residue" description="Phosphothreonine" evidence="2">
    <location>
        <position position="124"/>
    </location>
</feature>
<feature type="modified residue" description="N6-acetyllysine; alternate" evidence="2">
    <location>
        <position position="134"/>
    </location>
</feature>
<feature type="modified residue" description="Asymmetric dimethylarginine; alternate" evidence="3">
    <location>
        <position position="214"/>
    </location>
</feature>
<feature type="modified residue" description="Omega-N-methylarginine; alternate" evidence="2">
    <location>
        <position position="214"/>
    </location>
</feature>
<feature type="modified residue" description="Asymmetric dimethylarginine; alternate" evidence="3">
    <location>
        <position position="216"/>
    </location>
</feature>
<feature type="modified residue" description="Omega-N-methylarginine; alternate" evidence="2">
    <location>
        <position position="216"/>
    </location>
</feature>
<feature type="modified residue" description="Asymmetric dimethylarginine; alternate" evidence="8">
    <location>
        <position position="226"/>
    </location>
</feature>
<feature type="modified residue" description="Omega-N-methylarginine; alternate" evidence="8">
    <location>
        <position position="226"/>
    </location>
</feature>
<feature type="modified residue" description="Asymmetric dimethylarginine; alternate" evidence="8">
    <location>
        <position position="239"/>
    </location>
</feature>
<feature type="modified residue" description="Omega-N-methylarginine; alternate" evidence="8">
    <location>
        <position position="239"/>
    </location>
</feature>
<feature type="modified residue" description="Asymmetric dimethylarginine; alternate" evidence="8">
    <location>
        <position position="246"/>
    </location>
</feature>
<feature type="modified residue" description="Omega-N-methylarginine; alternate" evidence="8">
    <location>
        <position position="246"/>
    </location>
</feature>
<feature type="modified residue" description="Omega-N-methylarginine" evidence="8">
    <location>
        <position position="257"/>
    </location>
</feature>
<feature type="modified residue" description="Asymmetric dimethylarginine" evidence="3">
    <location>
        <position position="286"/>
    </location>
</feature>
<feature type="modified residue" description="Phosphoserine" evidence="2">
    <location>
        <position position="351"/>
    </location>
</feature>
<feature type="modified residue" description="Omega-N-methylarginine" evidence="2">
    <location>
        <position position="355"/>
    </location>
</feature>
<feature type="modified residue" description="Phosphoserine" evidence="2">
    <location>
        <position position="359"/>
    </location>
</feature>
<feature type="modified residue" description="Phosphotyrosine" evidence="2">
    <location>
        <position position="361"/>
    </location>
</feature>
<feature type="modified residue" description="Phosphotyrosine" evidence="2">
    <location>
        <position position="365"/>
    </location>
</feature>
<feature type="modified residue" description="Phosphoserine" evidence="2">
    <location>
        <position position="367"/>
    </location>
</feature>
<feature type="modified residue" description="Phosphoserine" evidence="2">
    <location>
        <position position="371"/>
    </location>
</feature>
<feature type="modified residue" description="Phosphotyrosine" evidence="2">
    <location>
        <position position="374"/>
    </location>
</feature>
<feature type="modified residue" description="Phosphoserine" evidence="2">
    <location>
        <position position="376"/>
    </location>
</feature>
<feature type="cross-link" description="Glycyl lysine isopeptide (Lys-Gly) (interchain with G-Cter in SUMO2)" evidence="2">
    <location>
        <position position="4"/>
    </location>
</feature>
<feature type="cross-link" description="Glycyl lysine isopeptide (Lys-Gly) (interchain with G-Cter in SUMO2)" evidence="2">
    <location>
        <position position="36"/>
    </location>
</feature>
<feature type="cross-link" description="Glycyl lysine isopeptide (Lys-Gly) (interchain with G-Cter in SUMO2)" evidence="2">
    <location>
        <position position="118"/>
    </location>
</feature>
<feature type="cross-link" description="Glycyl lysine isopeptide (Lys-Gly) (interchain with G-Cter in SUMO2); alternate" evidence="2">
    <location>
        <position position="134"/>
    </location>
</feature>
<feature type="cross-link" description="Glycyl lysine isopeptide (Lys-Gly) (interchain with G-Cter in SUMO2)" evidence="2">
    <location>
        <position position="151"/>
    </location>
</feature>
<feature type="cross-link" description="Glycyl lysine isopeptide (Lys-Gly) (interchain with G-Cter in SUMO2)" evidence="2">
    <location>
        <position position="182"/>
    </location>
</feature>
<feature type="splice variant" id="VSP_007350" description="In isoform 2." evidence="6 7">
    <original>MEVKPPPGRPQPDSGRRRRRRGE</original>
    <variation>M</variation>
    <location>
        <begin position="1"/>
        <end position="23"/>
    </location>
</feature>
<reference key="1">
    <citation type="submission" date="2001-12" db="EMBL/GenBank/DDBJ databases">
        <authorList>
            <person name="Bayarsaihan D."/>
        </authorList>
    </citation>
    <scope>NUCLEOTIDE SEQUENCE [MRNA] (ISOFORM 2)</scope>
</reference>
<reference key="2">
    <citation type="journal article" date="2004" name="Genome Res.">
        <title>The status, quality, and expansion of the NIH full-length cDNA project: the Mammalian Gene Collection (MGC).</title>
        <authorList>
            <consortium name="The MGC Project Team"/>
        </authorList>
    </citation>
    <scope>NUCLEOTIDE SEQUENCE [LARGE SCALE MRNA] (ISOFORMS 1 AND 2)</scope>
    <source>
        <strain>FVB/N</strain>
        <tissue>Colon</tissue>
        <tissue>Eye</tissue>
    </source>
</reference>
<reference key="3">
    <citation type="submission" date="2007-04" db="UniProtKB">
        <authorList>
            <person name="Lubec G."/>
            <person name="Kang S.U."/>
        </authorList>
    </citation>
    <scope>PROTEIN SEQUENCE OF 114-126</scope>
    <scope>IDENTIFICATION BY MASS SPECTROMETRY</scope>
    <source>
        <strain>C57BL/6J</strain>
        <tissue>Brain</tissue>
    </source>
</reference>
<reference key="4">
    <citation type="journal article" date="2010" name="Cell">
        <title>A tissue-specific atlas of mouse protein phosphorylation and expression.</title>
        <authorList>
            <person name="Huttlin E.L."/>
            <person name="Jedrychowski M.P."/>
            <person name="Elias J.E."/>
            <person name="Goswami T."/>
            <person name="Rad R."/>
            <person name="Beausoleil S.A."/>
            <person name="Villen J."/>
            <person name="Haas W."/>
            <person name="Sowa M.E."/>
            <person name="Gygi S.P."/>
        </authorList>
    </citation>
    <scope>IDENTIFICATION BY MASS SPECTROMETRY [LARGE SCALE ANALYSIS]</scope>
    <source>
        <tissue>Kidney</tissue>
        <tissue>Lung</tissue>
        <tissue>Pancreas</tissue>
        <tissue>Spleen</tissue>
    </source>
</reference>
<reference key="5">
    <citation type="journal article" date="2014" name="Mol. Cell. Proteomics">
        <title>Immunoaffinity enrichment and mass spectrometry analysis of protein methylation.</title>
        <authorList>
            <person name="Guo A."/>
            <person name="Gu H."/>
            <person name="Zhou J."/>
            <person name="Mulhern D."/>
            <person name="Wang Y."/>
            <person name="Lee K.A."/>
            <person name="Yang V."/>
            <person name="Aguiar M."/>
            <person name="Kornhauser J."/>
            <person name="Jia X."/>
            <person name="Ren J."/>
            <person name="Beausoleil S.A."/>
            <person name="Silva J.C."/>
            <person name="Vemulapalli V."/>
            <person name="Bedford M.T."/>
            <person name="Comb M.J."/>
        </authorList>
    </citation>
    <scope>METHYLATION [LARGE SCALE ANALYSIS] AT ARG-226; ARG-239; ARG-246 AND ARG-257</scope>
    <scope>IDENTIFICATION BY MASS SPECTROMETRY [LARGE SCALE ANALYSIS]</scope>
    <source>
        <tissue>Brain</tissue>
        <tissue>Embryo</tissue>
    </source>
</reference>
<dbReference type="EMBL" id="AF463524">
    <property type="protein sequence ID" value="AAN76992.1"/>
    <property type="molecule type" value="mRNA"/>
</dbReference>
<dbReference type="EMBL" id="BC023828">
    <property type="protein sequence ID" value="AAH23828.1"/>
    <property type="molecule type" value="mRNA"/>
</dbReference>
<dbReference type="EMBL" id="BC023908">
    <property type="protein sequence ID" value="AAH23908.1"/>
    <property type="molecule type" value="mRNA"/>
</dbReference>
<dbReference type="EMBL" id="BC038364">
    <property type="protein sequence ID" value="AAH38364.1"/>
    <property type="molecule type" value="mRNA"/>
</dbReference>
<dbReference type="EMBL" id="BC064824">
    <property type="protein sequence ID" value="AAH64824.1"/>
    <property type="molecule type" value="mRNA"/>
</dbReference>
<dbReference type="CCDS" id="CCDS16149.1">
    <molecule id="Q8BG05-1"/>
</dbReference>
<dbReference type="CCDS" id="CCDS50610.1">
    <molecule id="Q8BG05-2"/>
</dbReference>
<dbReference type="RefSeq" id="NP_001346900.1">
    <molecule id="Q8BG05-2"/>
    <property type="nucleotide sequence ID" value="NM_001359971.1"/>
</dbReference>
<dbReference type="RefSeq" id="NP_444493.1">
    <molecule id="Q8BG05-2"/>
    <property type="nucleotide sequence ID" value="NM_053263.1"/>
</dbReference>
<dbReference type="RefSeq" id="NP_666242.2">
    <molecule id="Q8BG05-1"/>
    <property type="nucleotide sequence ID" value="NM_146130.3"/>
</dbReference>
<dbReference type="RefSeq" id="NP_932758.1">
    <molecule id="Q8BG05-1"/>
    <property type="nucleotide sequence ID" value="NM_198090.2"/>
</dbReference>
<dbReference type="RefSeq" id="XP_011237818.1">
    <property type="nucleotide sequence ID" value="XM_011239516.2"/>
</dbReference>
<dbReference type="SMR" id="Q8BG05"/>
<dbReference type="BioGRID" id="230827">
    <property type="interactions" value="88"/>
</dbReference>
<dbReference type="FunCoup" id="Q8BG05">
    <property type="interactions" value="4185"/>
</dbReference>
<dbReference type="IntAct" id="Q8BG05">
    <property type="interactions" value="42"/>
</dbReference>
<dbReference type="MINT" id="Q8BG05"/>
<dbReference type="STRING" id="10090.ENSMUSP00000107595"/>
<dbReference type="GlyGen" id="Q8BG05">
    <property type="glycosylation" value="2 sites, 1 O-linked glycan (2 sites)"/>
</dbReference>
<dbReference type="iPTMnet" id="Q8BG05"/>
<dbReference type="MetOSite" id="Q8BG05"/>
<dbReference type="PhosphoSitePlus" id="Q8BG05"/>
<dbReference type="SwissPalm" id="Q8BG05"/>
<dbReference type="REPRODUCTION-2DPAGE" id="Q8BG05"/>
<dbReference type="jPOST" id="Q8BG05"/>
<dbReference type="PaxDb" id="10090-ENSMUSP00000107595"/>
<dbReference type="ProteomicsDB" id="300563">
    <molecule id="Q8BG05-1"/>
</dbReference>
<dbReference type="ProteomicsDB" id="300564">
    <molecule id="Q8BG05-2"/>
</dbReference>
<dbReference type="Pumba" id="Q8BG05"/>
<dbReference type="TopDownProteomics" id="Q8BG05-1">
    <molecule id="Q8BG05-1"/>
</dbReference>
<dbReference type="Antibodypedia" id="19537">
    <property type="antibodies" value="126 antibodies from 23 providers"/>
</dbReference>
<dbReference type="DNASU" id="229279"/>
<dbReference type="Ensembl" id="ENSMUST00000090792.11">
    <molecule id="Q8BG05-1"/>
    <property type="protein sequence ID" value="ENSMUSP00000088298.5"/>
    <property type="gene ID" value="ENSMUSG00000059005.14"/>
</dbReference>
<dbReference type="Ensembl" id="ENSMUST00000111962.8">
    <molecule id="Q8BG05-2"/>
    <property type="protein sequence ID" value="ENSMUSP00000107593.2"/>
    <property type="gene ID" value="ENSMUSG00000059005.14"/>
</dbReference>
<dbReference type="Ensembl" id="ENSMUST00000111964.8">
    <molecule id="Q8BG05-1"/>
    <property type="protein sequence ID" value="ENSMUSP00000107595.2"/>
    <property type="gene ID" value="ENSMUSG00000059005.14"/>
</dbReference>
<dbReference type="Ensembl" id="ENSMUST00000164947.9">
    <molecule id="Q8BG05-2"/>
    <property type="protein sequence ID" value="ENSMUSP00000126069.3"/>
    <property type="gene ID" value="ENSMUSG00000059005.14"/>
</dbReference>
<dbReference type="GeneID" id="229279"/>
<dbReference type="KEGG" id="mmu:229279"/>
<dbReference type="UCSC" id="uc008ken.2">
    <molecule id="Q8BG05-1"/>
    <property type="organism name" value="mouse"/>
</dbReference>
<dbReference type="AGR" id="MGI:1917171"/>
<dbReference type="CTD" id="220988"/>
<dbReference type="MGI" id="MGI:1917171">
    <property type="gene designation" value="Hnrnpa3"/>
</dbReference>
<dbReference type="VEuPathDB" id="HostDB:ENSMUSG00000059005"/>
<dbReference type="eggNOG" id="KOG0118">
    <property type="taxonomic scope" value="Eukaryota"/>
</dbReference>
<dbReference type="GeneTree" id="ENSGT00940000153147"/>
<dbReference type="HOGENOM" id="CLU_012062_1_0_1"/>
<dbReference type="InParanoid" id="Q8BG05"/>
<dbReference type="OMA" id="HCEAKRA"/>
<dbReference type="OrthoDB" id="1875751at2759"/>
<dbReference type="PhylomeDB" id="Q8BG05"/>
<dbReference type="TreeFam" id="TF314808"/>
<dbReference type="Reactome" id="R-MMU-72163">
    <property type="pathway name" value="mRNA Splicing - Major Pathway"/>
</dbReference>
<dbReference type="Reactome" id="R-MMU-72203">
    <property type="pathway name" value="Processing of Capped Intron-Containing Pre-mRNA"/>
</dbReference>
<dbReference type="BioGRID-ORCS" id="229279">
    <property type="hits" value="12 hits in 78 CRISPR screens"/>
</dbReference>
<dbReference type="CD-CODE" id="DE1E139C">
    <property type="entry name" value="Chromatoid body"/>
</dbReference>
<dbReference type="ChiTaRS" id="Hnrnpa3">
    <property type="organism name" value="mouse"/>
</dbReference>
<dbReference type="PRO" id="PR:Q8BG05"/>
<dbReference type="Proteomes" id="UP000000589">
    <property type="component" value="Chromosome 2"/>
</dbReference>
<dbReference type="RNAct" id="Q8BG05">
    <property type="molecule type" value="protein"/>
</dbReference>
<dbReference type="Bgee" id="ENSMUSG00000059005">
    <property type="expression patterns" value="Expressed in embryonic post-anal tail and 260 other cell types or tissues"/>
</dbReference>
<dbReference type="ExpressionAtlas" id="Q8BG05">
    <property type="expression patterns" value="baseline and differential"/>
</dbReference>
<dbReference type="GO" id="GO:0071013">
    <property type="term" value="C:catalytic step 2 spliceosome"/>
    <property type="evidence" value="ECO:0007669"/>
    <property type="project" value="Ensembl"/>
</dbReference>
<dbReference type="GO" id="GO:0098978">
    <property type="term" value="C:glutamatergic synapse"/>
    <property type="evidence" value="ECO:0007669"/>
    <property type="project" value="Ensembl"/>
</dbReference>
<dbReference type="GO" id="GO:0014069">
    <property type="term" value="C:postsynaptic density"/>
    <property type="evidence" value="ECO:0007669"/>
    <property type="project" value="Ensembl"/>
</dbReference>
<dbReference type="GO" id="GO:0035770">
    <property type="term" value="C:ribonucleoprotein granule"/>
    <property type="evidence" value="ECO:0007669"/>
    <property type="project" value="Ensembl"/>
</dbReference>
<dbReference type="GO" id="GO:0003729">
    <property type="term" value="F:mRNA binding"/>
    <property type="evidence" value="ECO:0007669"/>
    <property type="project" value="Ensembl"/>
</dbReference>
<dbReference type="GO" id="GO:0051033">
    <property type="term" value="F:RNA transmembrane transporter activity"/>
    <property type="evidence" value="ECO:0007669"/>
    <property type="project" value="Ensembl"/>
</dbReference>
<dbReference type="GO" id="GO:0006397">
    <property type="term" value="P:mRNA processing"/>
    <property type="evidence" value="ECO:0007669"/>
    <property type="project" value="UniProtKB-KW"/>
</dbReference>
<dbReference type="GO" id="GO:0051028">
    <property type="term" value="P:mRNA transport"/>
    <property type="evidence" value="ECO:0007669"/>
    <property type="project" value="Ensembl"/>
</dbReference>
<dbReference type="GO" id="GO:0008380">
    <property type="term" value="P:RNA splicing"/>
    <property type="evidence" value="ECO:0007669"/>
    <property type="project" value="UniProtKB-KW"/>
</dbReference>
<dbReference type="CDD" id="cd12578">
    <property type="entry name" value="RRM1_hnRNPA_like"/>
    <property type="match status" value="1"/>
</dbReference>
<dbReference type="CDD" id="cd12582">
    <property type="entry name" value="RRM2_hnRNPA3"/>
    <property type="match status" value="1"/>
</dbReference>
<dbReference type="FunFam" id="3.30.70.330:FF:000158">
    <property type="entry name" value="heterogeneous nuclear ribonucleoprotein A3 isoform X1"/>
    <property type="match status" value="1"/>
</dbReference>
<dbReference type="FunFam" id="3.30.70.330:FF:000350">
    <property type="entry name" value="heterogeneous nuclear ribonucleoprotein A3 isoform X1"/>
    <property type="match status" value="1"/>
</dbReference>
<dbReference type="Gene3D" id="3.30.70.330">
    <property type="match status" value="2"/>
</dbReference>
<dbReference type="InterPro" id="IPR034516">
    <property type="entry name" value="hnRNPA1/3_RRM2"/>
</dbReference>
<dbReference type="InterPro" id="IPR012677">
    <property type="entry name" value="Nucleotide-bd_a/b_plait_sf"/>
</dbReference>
<dbReference type="InterPro" id="IPR035979">
    <property type="entry name" value="RBD_domain_sf"/>
</dbReference>
<dbReference type="InterPro" id="IPR000504">
    <property type="entry name" value="RRM_dom"/>
</dbReference>
<dbReference type="PANTHER" id="PTHR48026:SF12">
    <property type="entry name" value="HETEROGENEOUS NUCLEAR RIBONUCLEOPROTEIN A3"/>
    <property type="match status" value="1"/>
</dbReference>
<dbReference type="PANTHER" id="PTHR48026">
    <property type="entry name" value="HOMOLOGOUS TO DROSOPHILA SQD (SQUID) PROTEIN"/>
    <property type="match status" value="1"/>
</dbReference>
<dbReference type="Pfam" id="PF00076">
    <property type="entry name" value="RRM_1"/>
    <property type="match status" value="2"/>
</dbReference>
<dbReference type="SMART" id="SM00360">
    <property type="entry name" value="RRM"/>
    <property type="match status" value="2"/>
</dbReference>
<dbReference type="SUPFAM" id="SSF54928">
    <property type="entry name" value="RNA-binding domain, RBD"/>
    <property type="match status" value="2"/>
</dbReference>
<dbReference type="PROSITE" id="PS50102">
    <property type="entry name" value="RRM"/>
    <property type="match status" value="2"/>
</dbReference>
<comment type="function">
    <text evidence="1">Plays a role in cytoplasmic trafficking of RNA. Binds to the cis-acting response element, A2RE. May be involved in pre-mRNA splicing (By similarity).</text>
</comment>
<comment type="subunit">
    <text evidence="1">Identified in the spliceosome C complex.</text>
</comment>
<comment type="subcellular location">
    <subcellularLocation>
        <location evidence="1">Nucleus</location>
    </subcellularLocation>
    <text evidence="1">Component of ribonucleosomes.</text>
</comment>
<comment type="alternative products">
    <event type="alternative splicing"/>
    <isoform>
        <id>Q8BG05-1</id>
        <name>1</name>
        <sequence type="displayed"/>
    </isoform>
    <isoform>
        <id>Q8BG05-2</id>
        <name>2</name>
        <sequence type="described" ref="VSP_007350"/>
    </isoform>
</comment>
<accession>Q8BG05</accession>
<accession>Q8BHF8</accession>
<proteinExistence type="evidence at protein level"/>
<sequence length="379" mass="39652">MEVKPPPGRPQPDSGRRRRRRGEEGHDPKEPEQLRKLFIGGLSFETTDDSLREHFEKWGTLTDCVVMRDPQTKRSRGFGFVTYSCVEEVDAAMCARPHKVDGRVVEPKRAVSREDSVKPGAHLTVKKIFVGGIKEDTEEYNLRDYFEKYGKIETIEVMEDRQSGKKRGFAFVTFDDHDTVDKIVVQKYHTINGHNCEVKKALSKQEMQSAGSQRGRGGGSGNFMGRGGNFGGGGGNFGRGGNFGGRGGYGGGGGGSRGSYGGGDGGYNGFGGDGGNYGGGPGYSSRGGYGGGGPGYGNQGGGYGGGGGGYDGYNEGGNFGGGNYGGGGNYNDFGNYSGQQQSNYGPMKGGSFGGRSSGSPYGGGYGSGGGSGGYGSRRF</sequence>
<evidence type="ECO:0000250" key="1"/>
<evidence type="ECO:0000250" key="2">
    <source>
        <dbReference type="UniProtKB" id="P51991"/>
    </source>
</evidence>
<evidence type="ECO:0000250" key="3">
    <source>
        <dbReference type="UniProtKB" id="Q6URK4"/>
    </source>
</evidence>
<evidence type="ECO:0000255" key="4">
    <source>
        <dbReference type="PROSITE-ProRule" id="PRU00176"/>
    </source>
</evidence>
<evidence type="ECO:0000256" key="5">
    <source>
        <dbReference type="SAM" id="MobiDB-lite"/>
    </source>
</evidence>
<evidence type="ECO:0000303" key="6">
    <source>
    </source>
</evidence>
<evidence type="ECO:0000303" key="7">
    <source ref="1"/>
</evidence>
<evidence type="ECO:0007744" key="8">
    <source>
    </source>
</evidence>